<evidence type="ECO:0000250" key="1">
    <source>
        <dbReference type="UniProtKB" id="P0A9N4"/>
    </source>
</evidence>
<evidence type="ECO:0000255" key="2">
    <source>
        <dbReference type="HAMAP-Rule" id="MF_02059"/>
    </source>
</evidence>
<evidence type="ECO:0000255" key="3">
    <source>
        <dbReference type="PROSITE-ProRule" id="PRU00711"/>
    </source>
</evidence>
<evidence type="ECO:0000255" key="4">
    <source>
        <dbReference type="PROSITE-ProRule" id="PRU01266"/>
    </source>
</evidence>
<evidence type="ECO:0000269" key="5">
    <source>
    </source>
</evidence>
<evidence type="ECO:0000269" key="6">
    <source>
    </source>
</evidence>
<evidence type="ECO:0000303" key="7">
    <source>
    </source>
</evidence>
<evidence type="ECO:0000303" key="8">
    <source>
    </source>
</evidence>
<evidence type="ECO:0000305" key="9"/>
<evidence type="ECO:0000305" key="10">
    <source>
    </source>
</evidence>
<evidence type="ECO:0000312" key="11">
    <source>
        <dbReference type="EMBL" id="ABB40075.2"/>
    </source>
</evidence>
<dbReference type="EC" id="1.97.1.-" evidence="2 10"/>
<dbReference type="EMBL" id="CP000112">
    <property type="protein sequence ID" value="ABB40075.2"/>
    <property type="molecule type" value="Genomic_DNA"/>
</dbReference>
<dbReference type="RefSeq" id="WP_011369018.1">
    <property type="nucleotide sequence ID" value="NC_007519.1"/>
</dbReference>
<dbReference type="SMR" id="Q30W71"/>
<dbReference type="STRING" id="207559.Dde_3281"/>
<dbReference type="KEGG" id="dde:Dde_3281"/>
<dbReference type="eggNOG" id="COG1180">
    <property type="taxonomic scope" value="Bacteria"/>
</dbReference>
<dbReference type="HOGENOM" id="CLU_058969_0_0_7"/>
<dbReference type="BioCyc" id="MetaCyc:MONOMER-17847"/>
<dbReference type="UniPathway" id="UPA01069"/>
<dbReference type="Proteomes" id="UP000002710">
    <property type="component" value="Chromosome"/>
</dbReference>
<dbReference type="GO" id="GO:0051539">
    <property type="term" value="F:4 iron, 4 sulfur cluster binding"/>
    <property type="evidence" value="ECO:0000314"/>
    <property type="project" value="UniProtKB"/>
</dbReference>
<dbReference type="GO" id="GO:0043364">
    <property type="term" value="F:glycyl-radical enzyme activating activity"/>
    <property type="evidence" value="ECO:0000314"/>
    <property type="project" value="UniProtKB"/>
</dbReference>
<dbReference type="GO" id="GO:0046872">
    <property type="term" value="F:metal ion binding"/>
    <property type="evidence" value="ECO:0007669"/>
    <property type="project" value="UniProtKB-KW"/>
</dbReference>
<dbReference type="GO" id="GO:1904047">
    <property type="term" value="F:S-adenosyl-L-methionine binding"/>
    <property type="evidence" value="ECO:0000314"/>
    <property type="project" value="UniProtKB"/>
</dbReference>
<dbReference type="GO" id="GO:0042426">
    <property type="term" value="P:choline catabolic process"/>
    <property type="evidence" value="ECO:0000314"/>
    <property type="project" value="UniProtKB"/>
</dbReference>
<dbReference type="Gene3D" id="3.30.70.20">
    <property type="match status" value="1"/>
</dbReference>
<dbReference type="Gene3D" id="3.20.20.70">
    <property type="entry name" value="Aldolase class I"/>
    <property type="match status" value="1"/>
</dbReference>
<dbReference type="HAMAP" id="MF_02059">
    <property type="entry name" value="Activ_enz_CutD"/>
    <property type="match status" value="1"/>
</dbReference>
<dbReference type="InterPro" id="IPR017896">
    <property type="entry name" value="4Fe4S_Fe-S-bd"/>
</dbReference>
<dbReference type="InterPro" id="IPR017900">
    <property type="entry name" value="4Fe4S_Fe_S_CS"/>
</dbReference>
<dbReference type="InterPro" id="IPR013785">
    <property type="entry name" value="Aldolase_TIM"/>
</dbReference>
<dbReference type="InterPro" id="IPR040074">
    <property type="entry name" value="BssD/PflA/YjjW"/>
</dbReference>
<dbReference type="InterPro" id="IPR030905">
    <property type="entry name" value="CutC_activ_rSAM"/>
</dbReference>
<dbReference type="InterPro" id="IPR034457">
    <property type="entry name" value="Organic_radical-activating"/>
</dbReference>
<dbReference type="InterPro" id="IPR012839">
    <property type="entry name" value="Organic_radical_activase"/>
</dbReference>
<dbReference type="InterPro" id="IPR001989">
    <property type="entry name" value="Radical_activat_CS"/>
</dbReference>
<dbReference type="InterPro" id="IPR007197">
    <property type="entry name" value="rSAM"/>
</dbReference>
<dbReference type="NCBIfam" id="TIGR04395">
    <property type="entry name" value="cutC_activ_rSAM"/>
    <property type="match status" value="1"/>
</dbReference>
<dbReference type="NCBIfam" id="TIGR02494">
    <property type="entry name" value="PFLE_PFLC"/>
    <property type="match status" value="1"/>
</dbReference>
<dbReference type="PANTHER" id="PTHR30352:SF4">
    <property type="entry name" value="PYRUVATE FORMATE-LYASE 2-ACTIVATING ENZYME"/>
    <property type="match status" value="1"/>
</dbReference>
<dbReference type="PANTHER" id="PTHR30352">
    <property type="entry name" value="PYRUVATE FORMATE-LYASE-ACTIVATING ENZYME"/>
    <property type="match status" value="1"/>
</dbReference>
<dbReference type="Pfam" id="PF13353">
    <property type="entry name" value="Fer4_12"/>
    <property type="match status" value="1"/>
</dbReference>
<dbReference type="Pfam" id="PF13187">
    <property type="entry name" value="Fer4_9"/>
    <property type="match status" value="1"/>
</dbReference>
<dbReference type="Pfam" id="PF04055">
    <property type="entry name" value="Radical_SAM"/>
    <property type="match status" value="1"/>
</dbReference>
<dbReference type="PIRSF" id="PIRSF000371">
    <property type="entry name" value="PFL_act_enz"/>
    <property type="match status" value="1"/>
</dbReference>
<dbReference type="SFLD" id="SFLDG01118">
    <property type="entry name" value="activating_enzymes__group_2"/>
    <property type="match status" value="1"/>
</dbReference>
<dbReference type="SFLD" id="SFLDS00029">
    <property type="entry name" value="Radical_SAM"/>
    <property type="match status" value="1"/>
</dbReference>
<dbReference type="SUPFAM" id="SSF54862">
    <property type="entry name" value="4Fe-4S ferredoxins"/>
    <property type="match status" value="1"/>
</dbReference>
<dbReference type="SUPFAM" id="SSF102114">
    <property type="entry name" value="Radical SAM enzymes"/>
    <property type="match status" value="1"/>
</dbReference>
<dbReference type="PROSITE" id="PS00198">
    <property type="entry name" value="4FE4S_FER_1"/>
    <property type="match status" value="2"/>
</dbReference>
<dbReference type="PROSITE" id="PS51379">
    <property type="entry name" value="4FE4S_FER_2"/>
    <property type="match status" value="2"/>
</dbReference>
<dbReference type="PROSITE" id="PS01087">
    <property type="entry name" value="RADICAL_ACTIVATING"/>
    <property type="match status" value="1"/>
</dbReference>
<dbReference type="PROSITE" id="PS51918">
    <property type="entry name" value="RADICAL_SAM"/>
    <property type="match status" value="1"/>
</dbReference>
<organism>
    <name type="scientific">Oleidesulfovibrio alaskensis (strain ATCC BAA-1058 / DSM 17464 / G20)</name>
    <name type="common">Desulfovibrio alaskensis</name>
    <dbReference type="NCBI Taxonomy" id="207559"/>
    <lineage>
        <taxon>Bacteria</taxon>
        <taxon>Pseudomonadati</taxon>
        <taxon>Thermodesulfobacteriota</taxon>
        <taxon>Desulfovibrionia</taxon>
        <taxon>Desulfovibrionales</taxon>
        <taxon>Desulfovibrionaceae</taxon>
        <taxon>Oleidesulfovibrio</taxon>
    </lineage>
</organism>
<feature type="chain" id="PRO_0000435666" description="Choline trimethylamine-lyase activating enzyme">
    <location>
        <begin position="1"/>
        <end position="310"/>
    </location>
</feature>
<feature type="domain" description="Radical SAM core" evidence="4">
    <location>
        <begin position="17"/>
        <end position="304"/>
    </location>
</feature>
<feature type="domain" description="4Fe-4S ferredoxin-type 1" evidence="3">
    <location>
        <begin position="48"/>
        <end position="77"/>
    </location>
</feature>
<feature type="domain" description="4Fe-4S ferredoxin-type 2" evidence="3">
    <location>
        <begin position="79"/>
        <end position="109"/>
    </location>
</feature>
<feature type="binding site" evidence="1 2">
    <location>
        <position position="31"/>
    </location>
    <ligand>
        <name>[4Fe-4S] cluster</name>
        <dbReference type="ChEBI" id="CHEBI:49883"/>
        <label>1</label>
        <note>4Fe-4S-S-AdoMet</note>
    </ligand>
</feature>
<feature type="binding site" evidence="1 2">
    <location>
        <position position="35"/>
    </location>
    <ligand>
        <name>[4Fe-4S] cluster</name>
        <dbReference type="ChEBI" id="CHEBI:49883"/>
        <label>1</label>
        <note>4Fe-4S-S-AdoMet</note>
    </ligand>
</feature>
<feature type="binding site" evidence="1 2">
    <location>
        <begin position="37"/>
        <end position="39"/>
    </location>
    <ligand>
        <name>S-adenosyl-L-methionine</name>
        <dbReference type="ChEBI" id="CHEBI:59789"/>
    </ligand>
</feature>
<feature type="binding site" evidence="1 2">
    <location>
        <position position="38"/>
    </location>
    <ligand>
        <name>[4Fe-4S] cluster</name>
        <dbReference type="ChEBI" id="CHEBI:49883"/>
        <label>1</label>
        <note>4Fe-4S-S-AdoMet</note>
    </ligand>
</feature>
<feature type="binding site" evidence="2 9">
    <location>
        <position position="57"/>
    </location>
    <ligand>
        <name>[4Fe-4S] cluster</name>
        <dbReference type="ChEBI" id="CHEBI:49883"/>
        <label>2</label>
    </ligand>
</feature>
<feature type="binding site" evidence="2 9">
    <location>
        <position position="60"/>
    </location>
    <ligand>
        <name>[4Fe-4S] cluster</name>
        <dbReference type="ChEBI" id="CHEBI:49883"/>
        <label>2</label>
    </ligand>
</feature>
<feature type="binding site" evidence="2 9">
    <location>
        <position position="63"/>
    </location>
    <ligand>
        <name>[4Fe-4S] cluster</name>
        <dbReference type="ChEBI" id="CHEBI:49883"/>
        <label>2</label>
    </ligand>
</feature>
<feature type="binding site" evidence="2 9">
    <location>
        <position position="99"/>
    </location>
    <ligand>
        <name>[4Fe-4S] cluster</name>
        <dbReference type="ChEBI" id="CHEBI:49883"/>
        <label>2</label>
    </ligand>
</feature>
<feature type="binding site" evidence="1 2">
    <location>
        <position position="139"/>
    </location>
    <ligand>
        <name>S-adenosyl-L-methionine</name>
        <dbReference type="ChEBI" id="CHEBI:59789"/>
    </ligand>
</feature>
<feature type="binding site" evidence="1 2">
    <location>
        <begin position="188"/>
        <end position="190"/>
    </location>
    <ligand>
        <name>S-adenosyl-L-methionine</name>
        <dbReference type="ChEBI" id="CHEBI:59789"/>
    </ligand>
</feature>
<feature type="binding site" evidence="1 2">
    <location>
        <position position="264"/>
    </location>
    <ligand>
        <name>S-adenosyl-L-methionine</name>
        <dbReference type="ChEBI" id="CHEBI:59789"/>
    </ligand>
</feature>
<comment type="function">
    <text evidence="5 6">Catalyzes activation of the choline trimethylamine-lyase CutC under anaerobic conditions by generation of an organic free radical on a glycine residue, via a homolytic cleavage of S-adenosyl-L-methionine (SAM). Is involved in the anaerobic choline utilization pathway that allows D.alaskensis to grow on choline as a source of carbon and energy.</text>
</comment>
<comment type="catalytic activity">
    <reaction evidence="10">
        <text>glycyl-[protein] + reduced [flavodoxin] + S-adenosyl-L-methionine = glycin-2-yl radical-[protein] + semiquinone [flavodoxin] + 5'-deoxyadenosine + L-methionine + H(+)</text>
        <dbReference type="Rhea" id="RHEA:61976"/>
        <dbReference type="Rhea" id="RHEA-COMP:10622"/>
        <dbReference type="Rhea" id="RHEA-COMP:14480"/>
        <dbReference type="Rhea" id="RHEA-COMP:15993"/>
        <dbReference type="Rhea" id="RHEA-COMP:15994"/>
        <dbReference type="ChEBI" id="CHEBI:15378"/>
        <dbReference type="ChEBI" id="CHEBI:17319"/>
        <dbReference type="ChEBI" id="CHEBI:29947"/>
        <dbReference type="ChEBI" id="CHEBI:32722"/>
        <dbReference type="ChEBI" id="CHEBI:57618"/>
        <dbReference type="ChEBI" id="CHEBI:57844"/>
        <dbReference type="ChEBI" id="CHEBI:59789"/>
        <dbReference type="ChEBI" id="CHEBI:140311"/>
    </reaction>
</comment>
<comment type="cofactor">
    <cofactor evidence="2 6">
        <name>[4Fe-4S] cluster</name>
        <dbReference type="ChEBI" id="CHEBI:49883"/>
    </cofactor>
    <text evidence="6 9">Binds 2 [4Fe-4S] clusters (PubMed:24854437). One cluster is coordinated with 3 cysteines and an exchangeable S-adenosyl-L-methionine (Probable).</text>
</comment>
<comment type="pathway">
    <text evidence="2 5">Amine and polyamine metabolism; choline degradation.</text>
</comment>
<comment type="subunit">
    <text evidence="6">Monomer.</text>
</comment>
<comment type="similarity">
    <text evidence="2 9">Belongs to the organic radical-activating enzymes family.</text>
</comment>
<protein>
    <recommendedName>
        <fullName evidence="2 7">Choline trimethylamine-lyase activating enzyme</fullName>
        <ecNumber evidence="2 10">1.97.1.-</ecNumber>
    </recommendedName>
    <alternativeName>
        <fullName evidence="2 7">Choline utilization protein D</fullName>
    </alternativeName>
    <alternativeName>
        <fullName evidence="2 8">GRE activase CutD</fullName>
    </alternativeName>
    <alternativeName>
        <fullName evidence="2 7">Glycyl-radical enzyme activating enzyme CutD</fullName>
        <shortName evidence="2 8">GRE activating enzyme CutD</shortName>
    </alternativeName>
</protein>
<reference key="1">
    <citation type="journal article" date="2011" name="J. Bacteriol.">
        <title>Complete genome sequence and updated annotation of Desulfovibrio alaskensis G20.</title>
        <authorList>
            <person name="Hauser L.J."/>
            <person name="Land M.L."/>
            <person name="Brown S.D."/>
            <person name="Larimer F."/>
            <person name="Keller K.L."/>
            <person name="Rapp-Giles B.J."/>
            <person name="Price M.N."/>
            <person name="Lin M."/>
            <person name="Bruce D.C."/>
            <person name="Detter J.C."/>
            <person name="Tapia R."/>
            <person name="Han C.S."/>
            <person name="Goodwin L.A."/>
            <person name="Cheng J.F."/>
            <person name="Pitluck S."/>
            <person name="Copeland A."/>
            <person name="Lucas S."/>
            <person name="Nolan M."/>
            <person name="Lapidus A.L."/>
            <person name="Palumbo A.V."/>
            <person name="Wall J.D."/>
        </authorList>
    </citation>
    <scope>NUCLEOTIDE SEQUENCE [LARGE SCALE GENOMIC DNA]</scope>
    <source>
        <strain>ATCC BAA-1058 / DSM 17464 / G20</strain>
    </source>
</reference>
<reference key="2">
    <citation type="journal article" date="2012" name="Proc. Natl. Acad. Sci. U.S.A.">
        <title>Microbial conversion of choline to trimethylamine requires a glycyl radical enzyme.</title>
        <authorList>
            <person name="Craciun S."/>
            <person name="Balskus E.P."/>
        </authorList>
    </citation>
    <scope>IDENTIFICATION</scope>
    <scope>FUNCTION</scope>
    <scope>PATHWAY</scope>
    <source>
        <strain>ATCC BAA-1058 / DSM 17464 / G20</strain>
    </source>
</reference>
<reference key="3">
    <citation type="journal article" date="2014" name="ACS Chem. Biol.">
        <title>Characterization of choline trimethylamine-lyase expands the chemistry of glycyl radical enzymes.</title>
        <authorList>
            <person name="Craciun S."/>
            <person name="Marks J.A."/>
            <person name="Balskus E.P."/>
        </authorList>
    </citation>
    <scope>FUNCTION AS A RADICAL SAM ENZYME</scope>
    <scope>CATALYTIC ACTIVITY</scope>
    <scope>SUBUNIT</scope>
    <scope>COFACTOR</scope>
    <source>
        <strain>ATCC BAA-1058 / DSM 17464 / G20</strain>
    </source>
</reference>
<keyword id="KW-0004">4Fe-4S</keyword>
<keyword id="KW-0408">Iron</keyword>
<keyword id="KW-0411">Iron-sulfur</keyword>
<keyword id="KW-0479">Metal-binding</keyword>
<keyword id="KW-0560">Oxidoreductase</keyword>
<keyword id="KW-1185">Reference proteome</keyword>
<keyword id="KW-0677">Repeat</keyword>
<keyword id="KW-0949">S-adenosyl-L-methionine</keyword>
<gene>
    <name evidence="2 7" type="primary">cutD</name>
    <name evidence="11" type="ordered locus">Dde_3281</name>
</gene>
<accession>Q30W71</accession>
<name>CUTD_OLEA2</name>
<sequence length="310" mass="34821">MIERKALIFNIQKYNMYDGPGVRTLVFFKGCPLRCKWCSNPEGQLRQYQVLYKENLCVHCGACVPVCPAGVHTISASTLRHGFAEGAQCIGCRRCEDVCPSSALAVVGEQKTISELLEVIEEDRPFYETSGGGVTLGGGEVLMQPEAAVNLLAACKQHGINTAIETCGYAKQEVVMKAAQYVDLFLYDVKHIDSARHYELTGVRNELILSNLTWLLENKHNVKIRVPLLRGVNDSEDDLRGLVEYLRPYQDYKNFKGIDLLPYHKMGVGKYKQLGWEYPIEGNPALSDADLERVEACIRKYDFPVSVIRH</sequence>
<proteinExistence type="evidence at protein level"/>